<comment type="function">
    <text evidence="1">Cell wall formation.</text>
</comment>
<comment type="catalytic activity">
    <reaction evidence="1">
        <text>UDP-N-acetyl-alpha-D-muramate + NADP(+) = UDP-N-acetyl-3-O-(1-carboxyvinyl)-alpha-D-glucosamine + NADPH + H(+)</text>
        <dbReference type="Rhea" id="RHEA:12248"/>
        <dbReference type="ChEBI" id="CHEBI:15378"/>
        <dbReference type="ChEBI" id="CHEBI:57783"/>
        <dbReference type="ChEBI" id="CHEBI:58349"/>
        <dbReference type="ChEBI" id="CHEBI:68483"/>
        <dbReference type="ChEBI" id="CHEBI:70757"/>
        <dbReference type="EC" id="1.3.1.98"/>
    </reaction>
</comment>
<comment type="cofactor">
    <cofactor evidence="1">
        <name>FAD</name>
        <dbReference type="ChEBI" id="CHEBI:57692"/>
    </cofactor>
</comment>
<comment type="pathway">
    <text evidence="1">Cell wall biogenesis; peptidoglycan biosynthesis.</text>
</comment>
<comment type="subcellular location">
    <subcellularLocation>
        <location evidence="1">Cytoplasm</location>
    </subcellularLocation>
</comment>
<comment type="similarity">
    <text evidence="1">Belongs to the MurB family.</text>
</comment>
<protein>
    <recommendedName>
        <fullName evidence="1">UDP-N-acetylenolpyruvoylglucosamine reductase</fullName>
        <ecNumber evidence="1">1.3.1.98</ecNumber>
    </recommendedName>
    <alternativeName>
        <fullName evidence="1">UDP-N-acetylmuramate dehydrogenase</fullName>
    </alternativeName>
</protein>
<dbReference type="EC" id="1.3.1.98" evidence="1"/>
<dbReference type="EMBL" id="CP000115">
    <property type="protein sequence ID" value="ABA04316.1"/>
    <property type="molecule type" value="Genomic_DNA"/>
</dbReference>
<dbReference type="RefSeq" id="WP_011314350.1">
    <property type="nucleotide sequence ID" value="NC_007406.1"/>
</dbReference>
<dbReference type="SMR" id="Q3STS5"/>
<dbReference type="STRING" id="323098.Nwi_1054"/>
<dbReference type="KEGG" id="nwi:Nwi_1054"/>
<dbReference type="eggNOG" id="COG0812">
    <property type="taxonomic scope" value="Bacteria"/>
</dbReference>
<dbReference type="HOGENOM" id="CLU_035304_1_0_5"/>
<dbReference type="OrthoDB" id="9804753at2"/>
<dbReference type="UniPathway" id="UPA00219"/>
<dbReference type="Proteomes" id="UP000002531">
    <property type="component" value="Chromosome"/>
</dbReference>
<dbReference type="GO" id="GO:0005829">
    <property type="term" value="C:cytosol"/>
    <property type="evidence" value="ECO:0007669"/>
    <property type="project" value="TreeGrafter"/>
</dbReference>
<dbReference type="GO" id="GO:0071949">
    <property type="term" value="F:FAD binding"/>
    <property type="evidence" value="ECO:0007669"/>
    <property type="project" value="InterPro"/>
</dbReference>
<dbReference type="GO" id="GO:0008762">
    <property type="term" value="F:UDP-N-acetylmuramate dehydrogenase activity"/>
    <property type="evidence" value="ECO:0007669"/>
    <property type="project" value="UniProtKB-UniRule"/>
</dbReference>
<dbReference type="GO" id="GO:0051301">
    <property type="term" value="P:cell division"/>
    <property type="evidence" value="ECO:0007669"/>
    <property type="project" value="UniProtKB-KW"/>
</dbReference>
<dbReference type="GO" id="GO:0071555">
    <property type="term" value="P:cell wall organization"/>
    <property type="evidence" value="ECO:0007669"/>
    <property type="project" value="UniProtKB-KW"/>
</dbReference>
<dbReference type="GO" id="GO:0009252">
    <property type="term" value="P:peptidoglycan biosynthetic process"/>
    <property type="evidence" value="ECO:0007669"/>
    <property type="project" value="UniProtKB-UniRule"/>
</dbReference>
<dbReference type="GO" id="GO:0008360">
    <property type="term" value="P:regulation of cell shape"/>
    <property type="evidence" value="ECO:0007669"/>
    <property type="project" value="UniProtKB-KW"/>
</dbReference>
<dbReference type="Gene3D" id="3.30.465.10">
    <property type="match status" value="1"/>
</dbReference>
<dbReference type="Gene3D" id="3.90.78.10">
    <property type="entry name" value="UDP-N-acetylenolpyruvoylglucosamine reductase, C-terminal domain"/>
    <property type="match status" value="1"/>
</dbReference>
<dbReference type="Gene3D" id="3.30.43.10">
    <property type="entry name" value="Uridine Diphospho-n-acetylenolpyruvylglucosamine Reductase, domain 2"/>
    <property type="match status" value="1"/>
</dbReference>
<dbReference type="HAMAP" id="MF_00037">
    <property type="entry name" value="MurB"/>
    <property type="match status" value="1"/>
</dbReference>
<dbReference type="InterPro" id="IPR016166">
    <property type="entry name" value="FAD-bd_PCMH"/>
</dbReference>
<dbReference type="InterPro" id="IPR036318">
    <property type="entry name" value="FAD-bd_PCMH-like_sf"/>
</dbReference>
<dbReference type="InterPro" id="IPR016167">
    <property type="entry name" value="FAD-bd_PCMH_sub1"/>
</dbReference>
<dbReference type="InterPro" id="IPR016169">
    <property type="entry name" value="FAD-bd_PCMH_sub2"/>
</dbReference>
<dbReference type="InterPro" id="IPR003170">
    <property type="entry name" value="MurB"/>
</dbReference>
<dbReference type="InterPro" id="IPR011601">
    <property type="entry name" value="MurB_C"/>
</dbReference>
<dbReference type="InterPro" id="IPR036635">
    <property type="entry name" value="MurB_C_sf"/>
</dbReference>
<dbReference type="InterPro" id="IPR006094">
    <property type="entry name" value="Oxid_FAD_bind_N"/>
</dbReference>
<dbReference type="NCBIfam" id="TIGR00179">
    <property type="entry name" value="murB"/>
    <property type="match status" value="1"/>
</dbReference>
<dbReference type="NCBIfam" id="NF010480">
    <property type="entry name" value="PRK13905.1"/>
    <property type="match status" value="1"/>
</dbReference>
<dbReference type="PANTHER" id="PTHR21071">
    <property type="entry name" value="UDP-N-ACETYLENOLPYRUVOYLGLUCOSAMINE REDUCTASE"/>
    <property type="match status" value="1"/>
</dbReference>
<dbReference type="PANTHER" id="PTHR21071:SF4">
    <property type="entry name" value="UDP-N-ACETYLENOLPYRUVOYLGLUCOSAMINE REDUCTASE"/>
    <property type="match status" value="1"/>
</dbReference>
<dbReference type="Pfam" id="PF01565">
    <property type="entry name" value="FAD_binding_4"/>
    <property type="match status" value="1"/>
</dbReference>
<dbReference type="Pfam" id="PF02873">
    <property type="entry name" value="MurB_C"/>
    <property type="match status" value="1"/>
</dbReference>
<dbReference type="SUPFAM" id="SSF56176">
    <property type="entry name" value="FAD-binding/transporter-associated domain-like"/>
    <property type="match status" value="1"/>
</dbReference>
<dbReference type="SUPFAM" id="SSF56194">
    <property type="entry name" value="Uridine diphospho-N-Acetylenolpyruvylglucosamine reductase, MurB, C-terminal domain"/>
    <property type="match status" value="1"/>
</dbReference>
<dbReference type="PROSITE" id="PS51387">
    <property type="entry name" value="FAD_PCMH"/>
    <property type="match status" value="1"/>
</dbReference>
<sequence>MTFPDIVPELKSRMPDLRGRLLANESLAPLTWFRVGGPAQALFTPADEDDLAYFLSHLPEEIPVCCIGVGSNLIVRDRGLPGVVIRLPPRGFGEITIDGDAVHAGAAALDKRVAEAAAAASISGLEFYFGIPGTIGGALRMNAGANGSETRDVLVEARALSRRGERMTFDNFAMAFDYRSSGIDPSVIFTGAMFRGRIAEPQAIRARMNEVQAHRETVQPIREKTGGSTFKNPPGQSAWKLIDAAGMRGHRVGGAQVSDMHCNFLINTGEATARDIETLGESVRERVKRHSGVDLQWEIKRIGLG</sequence>
<keyword id="KW-0131">Cell cycle</keyword>
<keyword id="KW-0132">Cell division</keyword>
<keyword id="KW-0133">Cell shape</keyword>
<keyword id="KW-0961">Cell wall biogenesis/degradation</keyword>
<keyword id="KW-0963">Cytoplasm</keyword>
<keyword id="KW-0274">FAD</keyword>
<keyword id="KW-0285">Flavoprotein</keyword>
<keyword id="KW-0521">NADP</keyword>
<keyword id="KW-0560">Oxidoreductase</keyword>
<keyword id="KW-0573">Peptidoglycan synthesis</keyword>
<keyword id="KW-1185">Reference proteome</keyword>
<name>MURB_NITWN</name>
<accession>Q3STS5</accession>
<reference key="1">
    <citation type="journal article" date="2006" name="Appl. Environ. Microbiol.">
        <title>Genome sequence of the chemolithoautotrophic nitrite-oxidizing bacterium Nitrobacter winogradskyi Nb-255.</title>
        <authorList>
            <person name="Starkenburg S.R."/>
            <person name="Chain P.S.G."/>
            <person name="Sayavedra-Soto L.A."/>
            <person name="Hauser L."/>
            <person name="Land M.L."/>
            <person name="Larimer F.W."/>
            <person name="Malfatti S.A."/>
            <person name="Klotz M.G."/>
            <person name="Bottomley P.J."/>
            <person name="Arp D.J."/>
            <person name="Hickey W.J."/>
        </authorList>
    </citation>
    <scope>NUCLEOTIDE SEQUENCE [LARGE SCALE GENOMIC DNA]</scope>
    <source>
        <strain>ATCC 25391 / DSM 10237 / CIP 104748 / NCIMB 11846 / Nb-255</strain>
    </source>
</reference>
<evidence type="ECO:0000255" key="1">
    <source>
        <dbReference type="HAMAP-Rule" id="MF_00037"/>
    </source>
</evidence>
<feature type="chain" id="PRO_0000224697" description="UDP-N-acetylenolpyruvoylglucosamine reductase">
    <location>
        <begin position="1"/>
        <end position="305"/>
    </location>
</feature>
<feature type="domain" description="FAD-binding PCMH-type" evidence="1">
    <location>
        <begin position="35"/>
        <end position="214"/>
    </location>
</feature>
<feature type="active site" evidence="1">
    <location>
        <position position="179"/>
    </location>
</feature>
<feature type="active site" description="Proton donor" evidence="1">
    <location>
        <position position="228"/>
    </location>
</feature>
<feature type="active site" evidence="1">
    <location>
        <position position="298"/>
    </location>
</feature>
<proteinExistence type="inferred from homology"/>
<organism>
    <name type="scientific">Nitrobacter winogradskyi (strain ATCC 25391 / DSM 10237 / CIP 104748 / NCIMB 11846 / Nb-255)</name>
    <dbReference type="NCBI Taxonomy" id="323098"/>
    <lineage>
        <taxon>Bacteria</taxon>
        <taxon>Pseudomonadati</taxon>
        <taxon>Pseudomonadota</taxon>
        <taxon>Alphaproteobacteria</taxon>
        <taxon>Hyphomicrobiales</taxon>
        <taxon>Nitrobacteraceae</taxon>
        <taxon>Nitrobacter</taxon>
    </lineage>
</organism>
<gene>
    <name evidence="1" type="primary">murB</name>
    <name type="ordered locus">Nwi_1054</name>
</gene>